<dbReference type="EMBL" id="AF005370">
    <property type="protein sequence ID" value="AAC58071.1"/>
    <property type="molecule type" value="Genomic_DNA"/>
</dbReference>
<dbReference type="PIR" id="T03119">
    <property type="entry name" value="T03119"/>
</dbReference>
<dbReference type="RefSeq" id="NP_065523.1">
    <property type="nucleotide sequence ID" value="NC_002531.1"/>
</dbReference>
<dbReference type="KEGG" id="vg:911740"/>
<dbReference type="Proteomes" id="UP000000941">
    <property type="component" value="Segment"/>
</dbReference>
<dbReference type="InterPro" id="IPR004285">
    <property type="entry name" value="Herpes_UL87_C"/>
</dbReference>
<dbReference type="Pfam" id="PF03043">
    <property type="entry name" value="Herpes_UL87"/>
    <property type="match status" value="1"/>
</dbReference>
<reference key="1">
    <citation type="journal article" date="1997" name="J. Virol.">
        <title>Primary structure of the alcelaphine herpesvirus 1 genome.</title>
        <authorList>
            <person name="Ensser A."/>
            <person name="Pflanz R."/>
            <person name="Fleckenstein B."/>
        </authorList>
    </citation>
    <scope>NUCLEOTIDE SEQUENCE [LARGE SCALE GENOMIC DNA]</scope>
</reference>
<sequence>MSVLEECCYLPVVSAQQLPEPSDEGYLEDQLEIFGILALNKKLTRAECCLTQLDTLMAPELTFYTCRAARRLLLGLVHVPCVSVGYMPPGMCLHKGSSFSGAGLVFNGYQYYTTNQLTTDTFIPGIRSMEETDPVLDKNFTWRIIYFPKLLTTRVSWTLMFQIISRYVNMYELDECVSLFCNSLNPHLKQVCTYNYSLLTYHLKNPSLQRWPHSSKTVGKTSEEFLLINFLLHWPSSTCLAQLRAKVLKGVKQFPGILQYLSALPVSKAVTVQGLEILKYIECIGLLFPQWAPVLLKRTPKKFTCVITVVNNHTNSSIWLQFPESGAMLRTALCMAVAKHICREKELISPGKQQLSLARALVANFEKMQYAPKDFPIILYPTEIYRPMPVDDQPASDIKNSFNALTHISINSFKVNVFNTNMVINTNITCLQAPCCYSQIVNVPKLVNNFVIKKYSVKEPAFTVSIFYSEDFNLKAAINVNISGDIINFLLAMNTLKCFLPVTDIFPASMANWNSTFDLHGLENQHLVRSGRRDVFWTTNFPSVVSSNEGYNVSWFKAATATVSKIHGSDLTKQVQGEIRRLIGHRHARISFCKNKLFATLESRNCAQIQAAHKRFLECLYECCSWFRANTNALTQLVQCGAFDFSKRIIAHSKSRHECALCGYKVCNSIPKVIINHKKTRLDDCGRNANFLSYLHRGAPHMINTKAKLFKHICRRASLRSYHFAGCAKAKEWSKALRLAHQMPS</sequence>
<evidence type="ECO:0000305" key="1"/>
<protein>
    <recommendedName>
        <fullName>Uncharacterized gene 24 protein</fullName>
    </recommendedName>
</protein>
<organismHost>
    <name type="scientific">Connochaetes taurinus</name>
    <name type="common">Blue wildebeest</name>
    <dbReference type="NCBI Taxonomy" id="9927"/>
</organismHost>
<comment type="similarity">
    <text evidence="1">Belongs to the herpesviridae UL87 family.</text>
</comment>
<gene>
    <name type="primary">24</name>
</gene>
<feature type="chain" id="PRO_0000405719" description="Uncharacterized gene 24 protein">
    <location>
        <begin position="1"/>
        <end position="745"/>
    </location>
</feature>
<name>UL87_ALHV1</name>
<organism>
    <name type="scientific">Alcelaphine herpesvirus 1 (strain C500)</name>
    <name type="common">AlHV-1</name>
    <name type="synonym">Malignant catarrhal fever virus</name>
    <dbReference type="NCBI Taxonomy" id="654901"/>
    <lineage>
        <taxon>Viruses</taxon>
        <taxon>Duplodnaviria</taxon>
        <taxon>Heunggongvirae</taxon>
        <taxon>Peploviricota</taxon>
        <taxon>Herviviricetes</taxon>
        <taxon>Herpesvirales</taxon>
        <taxon>Orthoherpesviridae</taxon>
        <taxon>Gammaherpesvirinae</taxon>
        <taxon>Macavirus</taxon>
        <taxon>Macavirus alcelaphinegamma1</taxon>
    </lineage>
</organism>
<proteinExistence type="inferred from homology"/>
<accession>O36374</accession>
<keyword id="KW-1185">Reference proteome</keyword>